<feature type="chain" id="PRO_0000155610" description="Probable metallophosphoesterase MPN_126">
    <location>
        <begin position="1"/>
        <end position="159"/>
    </location>
</feature>
<feature type="binding site" evidence="1">
    <location>
        <position position="9"/>
    </location>
    <ligand>
        <name>Mn(2+)</name>
        <dbReference type="ChEBI" id="CHEBI:29035"/>
        <label>1</label>
    </ligand>
</feature>
<feature type="binding site" evidence="1">
    <location>
        <position position="11"/>
    </location>
    <ligand>
        <name>Mn(2+)</name>
        <dbReference type="ChEBI" id="CHEBI:29035"/>
        <label>1</label>
    </ligand>
</feature>
<feature type="binding site" evidence="1">
    <location>
        <position position="34"/>
    </location>
    <ligand>
        <name>Mn(2+)</name>
        <dbReference type="ChEBI" id="CHEBI:29035"/>
        <label>1</label>
    </ligand>
</feature>
<feature type="binding site" evidence="1">
    <location>
        <position position="34"/>
    </location>
    <ligand>
        <name>Mn(2+)</name>
        <dbReference type="ChEBI" id="CHEBI:29035"/>
        <label>2</label>
    </ligand>
</feature>
<feature type="binding site" evidence="1">
    <location>
        <position position="53"/>
    </location>
    <ligand>
        <name>Mn(2+)</name>
        <dbReference type="ChEBI" id="CHEBI:29035"/>
        <label>2</label>
    </ligand>
</feature>
<feature type="binding site" evidence="1">
    <location>
        <position position="75"/>
    </location>
    <ligand>
        <name>Mn(2+)</name>
        <dbReference type="ChEBI" id="CHEBI:29035"/>
        <label>2</label>
    </ligand>
</feature>
<feature type="binding site" evidence="1">
    <location>
        <position position="107"/>
    </location>
    <ligand>
        <name>Mn(2+)</name>
        <dbReference type="ChEBI" id="CHEBI:29035"/>
        <label>2</label>
    </ligand>
</feature>
<feature type="binding site" evidence="1">
    <location>
        <position position="109"/>
    </location>
    <ligand>
        <name>Mn(2+)</name>
        <dbReference type="ChEBI" id="CHEBI:29035"/>
        <label>1</label>
    </ligand>
</feature>
<proteinExistence type="evidence at protein level"/>
<name>Y126_MYCPN</name>
<sequence length="159" mass="18339">MTKVLVLSDTHGYNDRWLAVMKLHNPDVVIHAGDHLTTKKFMDQNATFWVAGNHDVVGEEIQMFELEGIQFVLMHGHQAPRHDLKQWYKMLVDQAKSYLCDVLIVGHSHIEHYETIDGIQVINPGSLEIPRNPRKLPTYCNLNLSQGRISDLTFHFPRD</sequence>
<gene>
    <name type="ordered locus">MPN_126</name>
    <name type="ORF">C09_orf159</name>
    <name type="ORF">MP028</name>
</gene>
<comment type="cofactor">
    <cofactor evidence="1">
        <name>Mn(2+)</name>
        <dbReference type="ChEBI" id="CHEBI:29035"/>
    </cofactor>
    <text evidence="1">Binds 2 manganese ions per subunit.</text>
</comment>
<comment type="similarity">
    <text evidence="2">Belongs to the metallophosphoesterase superfamily. YfcE family.</text>
</comment>
<protein>
    <recommendedName>
        <fullName evidence="2">Probable metallophosphoesterase MPN_126</fullName>
        <ecNumber evidence="1">3.1.4.-</ecNumber>
    </recommendedName>
</protein>
<reference key="1">
    <citation type="journal article" date="1996" name="Nucleic Acids Res.">
        <title>Complete sequence analysis of the genome of the bacterium Mycoplasma pneumoniae.</title>
        <authorList>
            <person name="Himmelreich R."/>
            <person name="Hilbert H."/>
            <person name="Plagens H."/>
            <person name="Pirkl E."/>
            <person name="Li B.-C."/>
            <person name="Herrmann R."/>
        </authorList>
    </citation>
    <scope>NUCLEOTIDE SEQUENCE [LARGE SCALE GENOMIC DNA]</scope>
    <source>
        <strain>ATCC 29342 / M129 / Subtype 1</strain>
    </source>
</reference>
<reference key="2">
    <citation type="journal article" date="2000" name="Electrophoresis">
        <title>Towards a two-dimensional proteome map of Mycoplasma pneumoniae.</title>
        <authorList>
            <person name="Regula J.T."/>
            <person name="Ueberle B."/>
            <person name="Boguth G."/>
            <person name="Goerg A."/>
            <person name="Schnoelzer M."/>
            <person name="Herrmann R."/>
            <person name="Frank R."/>
        </authorList>
    </citation>
    <scope>IDENTIFICATION BY MASS SPECTROMETRY</scope>
    <source>
        <strain>ATCC 29342 / M129 / Subtype 1</strain>
    </source>
</reference>
<organism>
    <name type="scientific">Mycoplasma pneumoniae (strain ATCC 29342 / M129 / Subtype 1)</name>
    <name type="common">Mycoplasmoides pneumoniae</name>
    <dbReference type="NCBI Taxonomy" id="272634"/>
    <lineage>
        <taxon>Bacteria</taxon>
        <taxon>Bacillati</taxon>
        <taxon>Mycoplasmatota</taxon>
        <taxon>Mycoplasmoidales</taxon>
        <taxon>Mycoplasmoidaceae</taxon>
        <taxon>Mycoplasmoides</taxon>
    </lineage>
</organism>
<dbReference type="EC" id="3.1.4.-" evidence="1"/>
<dbReference type="EMBL" id="U00089">
    <property type="protein sequence ID" value="AAB95676.1"/>
    <property type="molecule type" value="Genomic_DNA"/>
</dbReference>
<dbReference type="PIR" id="S73354">
    <property type="entry name" value="S73354"/>
</dbReference>
<dbReference type="RefSeq" id="NP_109814.1">
    <property type="nucleotide sequence ID" value="NC_000912.1"/>
</dbReference>
<dbReference type="RefSeq" id="WP_010874483.1">
    <property type="nucleotide sequence ID" value="NZ_OU342337.1"/>
</dbReference>
<dbReference type="SMR" id="P75349"/>
<dbReference type="IntAct" id="P75349">
    <property type="interactions" value="1"/>
</dbReference>
<dbReference type="STRING" id="272634.MPN_126"/>
<dbReference type="EnsemblBacteria" id="AAB95676">
    <property type="protein sequence ID" value="AAB95676"/>
    <property type="gene ID" value="MPN_126"/>
</dbReference>
<dbReference type="KEGG" id="mpn:MPN_126"/>
<dbReference type="PATRIC" id="fig|272634.6.peg.133"/>
<dbReference type="HOGENOM" id="CLU_063749_2_0_14"/>
<dbReference type="OrthoDB" id="9800565at2"/>
<dbReference type="BioCyc" id="MPNE272634:G1GJ3-209-MONOMER"/>
<dbReference type="Proteomes" id="UP000000808">
    <property type="component" value="Chromosome"/>
</dbReference>
<dbReference type="GO" id="GO:0016787">
    <property type="term" value="F:hydrolase activity"/>
    <property type="evidence" value="ECO:0007669"/>
    <property type="project" value="UniProtKB-KW"/>
</dbReference>
<dbReference type="GO" id="GO:0046872">
    <property type="term" value="F:metal ion binding"/>
    <property type="evidence" value="ECO:0007669"/>
    <property type="project" value="UniProtKB-KW"/>
</dbReference>
<dbReference type="Gene3D" id="3.60.21.10">
    <property type="match status" value="1"/>
</dbReference>
<dbReference type="InterPro" id="IPR024654">
    <property type="entry name" value="Calcineurin-like_PHP_lpxH"/>
</dbReference>
<dbReference type="InterPro" id="IPR029052">
    <property type="entry name" value="Metallo-depent_PP-like"/>
</dbReference>
<dbReference type="InterPro" id="IPR020935">
    <property type="entry name" value="PdiEstase_YfcE_CS"/>
</dbReference>
<dbReference type="InterPro" id="IPR000979">
    <property type="entry name" value="Phosphodiesterase_MJ0936/Vps29"/>
</dbReference>
<dbReference type="NCBIfam" id="TIGR00040">
    <property type="entry name" value="yfcE"/>
    <property type="match status" value="1"/>
</dbReference>
<dbReference type="PANTHER" id="PTHR11124">
    <property type="entry name" value="VACUOLAR SORTING PROTEIN VPS29"/>
    <property type="match status" value="1"/>
</dbReference>
<dbReference type="Pfam" id="PF12850">
    <property type="entry name" value="Metallophos_2"/>
    <property type="match status" value="1"/>
</dbReference>
<dbReference type="SUPFAM" id="SSF56300">
    <property type="entry name" value="Metallo-dependent phosphatases"/>
    <property type="match status" value="1"/>
</dbReference>
<dbReference type="PROSITE" id="PS01269">
    <property type="entry name" value="UPF0025"/>
    <property type="match status" value="1"/>
</dbReference>
<keyword id="KW-0378">Hydrolase</keyword>
<keyword id="KW-0464">Manganese</keyword>
<keyword id="KW-0479">Metal-binding</keyword>
<keyword id="KW-1185">Reference proteome</keyword>
<evidence type="ECO:0000250" key="1">
    <source>
        <dbReference type="UniProtKB" id="P67095"/>
    </source>
</evidence>
<evidence type="ECO:0000305" key="2"/>
<accession>P75349</accession>